<keyword id="KW-1003">Cell membrane</keyword>
<keyword id="KW-0407">Ion channel</keyword>
<keyword id="KW-0406">Ion transport</keyword>
<keyword id="KW-0472">Membrane</keyword>
<keyword id="KW-0630">Potassium</keyword>
<keyword id="KW-0633">Potassium transport</keyword>
<keyword id="KW-1185">Reference proteome</keyword>
<keyword id="KW-0702">S-nitrosylation</keyword>
<keyword id="KW-0812">Transmembrane</keyword>
<keyword id="KW-1133">Transmembrane helix</keyword>
<keyword id="KW-0813">Transport</keyword>
<keyword id="KW-0851">Voltage-gated channel</keyword>
<gene>
    <name type="primary">KCNJ2</name>
    <name type="synonym">IRK1</name>
</gene>
<reference key="1">
    <citation type="journal article" date="1998" name="Exp. Eye Res.">
        <title>Inwardly rectifying potassium channels in lens epithelium are from the IRK1 (Kir 2.1) family.</title>
        <authorList>
            <person name="Rae J.L."/>
            <person name="Shepard A.R."/>
        </authorList>
    </citation>
    <scope>NUCLEOTIDE SEQUENCE [MRNA]</scope>
    <source>
        <tissue>Lens epithelium</tissue>
    </source>
</reference>
<accession>O18839</accession>
<evidence type="ECO:0000250" key="1"/>
<evidence type="ECO:0000250" key="2">
    <source>
        <dbReference type="UniProtKB" id="O19182"/>
    </source>
</evidence>
<evidence type="ECO:0000250" key="3">
    <source>
        <dbReference type="UniProtKB" id="P63252"/>
    </source>
</evidence>
<evidence type="ECO:0000250" key="4">
    <source>
        <dbReference type="UniProtKB" id="Q64273"/>
    </source>
</evidence>
<evidence type="ECO:0000255" key="5"/>
<evidence type="ECO:0000256" key="6">
    <source>
        <dbReference type="SAM" id="MobiDB-lite"/>
    </source>
</evidence>
<evidence type="ECO:0000305" key="7"/>
<feature type="chain" id="PRO_0000154926" description="Inward rectifier potassium channel 2">
    <location>
        <begin position="1"/>
        <end position="427"/>
    </location>
</feature>
<feature type="topological domain" description="Cytoplasmic" evidence="1">
    <location>
        <begin position="1"/>
        <end position="81"/>
    </location>
</feature>
<feature type="transmembrane region" description="Helical; Name=M1" evidence="1">
    <location>
        <begin position="82"/>
        <end position="106"/>
    </location>
</feature>
<feature type="topological domain" description="Extracellular" evidence="1">
    <location>
        <begin position="107"/>
        <end position="128"/>
    </location>
</feature>
<feature type="intramembrane region" description="Helical; Pore-forming; Name=H5" evidence="1">
    <location>
        <begin position="129"/>
        <end position="140"/>
    </location>
</feature>
<feature type="intramembrane region" description="Pore-forming" evidence="1">
    <location>
        <begin position="141"/>
        <end position="147"/>
    </location>
</feature>
<feature type="topological domain" description="Extracellular" evidence="1">
    <location>
        <begin position="148"/>
        <end position="156"/>
    </location>
</feature>
<feature type="transmembrane region" description="Helical; Name=M2" evidence="1">
    <location>
        <begin position="157"/>
        <end position="178"/>
    </location>
</feature>
<feature type="topological domain" description="Cytoplasmic" evidence="1">
    <location>
        <begin position="179"/>
        <end position="427"/>
    </location>
</feature>
<feature type="region of interest" description="Polyphosphoinositide (PIP2)-binding" evidence="4">
    <location>
        <begin position="181"/>
        <end position="208"/>
    </location>
</feature>
<feature type="region of interest" description="Disordered" evidence="6">
    <location>
        <begin position="384"/>
        <end position="427"/>
    </location>
</feature>
<feature type="short sequence motif" description="Selectivity filter" evidence="1">
    <location>
        <begin position="142"/>
        <end position="147"/>
    </location>
</feature>
<feature type="short sequence motif" description="PDZ-binding" evidence="5">
    <location>
        <begin position="425"/>
        <end position="427"/>
    </location>
</feature>
<feature type="site" description="Role in the control of polyamine-mediated channel gating and in the blocking by intracellular magnesium" evidence="1">
    <location>
        <position position="172"/>
    </location>
</feature>
<feature type="modified residue" description="S-nitrosocysteine" evidence="3">
    <location>
        <position position="76"/>
    </location>
</feature>
<proteinExistence type="evidence at transcript level"/>
<comment type="function">
    <text evidence="3">Inward rectifier potassium channels are characterized by a greater tendency to allow potassium to flow into the cell rather than out of it. Their voltage dependence is regulated by the concentration of extracellular potassium; as external potassium is raised, the voltage range of the channel opening shifts to more positive voltages. The inward rectification is mainly due to the blockage of outward current by internal magnesium. Can be blocked by extracellular barium and cesium. Probably participates in establishing action potential waveform and excitability of neuronal and muscle tissues.</text>
</comment>
<comment type="catalytic activity">
    <reaction evidence="3">
        <text>K(+)(in) = K(+)(out)</text>
        <dbReference type="Rhea" id="RHEA:29463"/>
        <dbReference type="ChEBI" id="CHEBI:29103"/>
    </reaction>
</comment>
<comment type="activity regulation">
    <text evidence="4">Activated by phosphatidylinositol 4,5 biphosphate (PtdIns(4,5)P2).</text>
</comment>
<comment type="subunit">
    <text evidence="3 4">Homotetramer. Homomultimeric and heteromultimeric association with KCNJ4/Kir2.3. Can form heteromeric channels with Kir2.6/KCNJ18 (By similarity). Associates, via its PDZ-recognition domain, with a complex containing LIN7A, LIN7B, LIN7C, DLG1, CASK and APBA1.</text>
</comment>
<comment type="subcellular location">
    <subcellularLocation>
        <location evidence="2">Cell membrane</location>
        <topology evidence="5">Multi-pass membrane protein</topology>
    </subcellularLocation>
    <subcellularLocation>
        <location evidence="4">Cell membrane</location>
        <location evidence="4">Sarcolemma</location>
        <location evidence="4">T-tubule</location>
    </subcellularLocation>
</comment>
<comment type="PTM">
    <text evidence="3">S-nitrosylation increases the open probability and inward rectifying currents.</text>
</comment>
<comment type="similarity">
    <text evidence="7">Belongs to the inward rectifier-type potassium channel (TC 1.A.2.1) family. KCNJ2 subfamily.</text>
</comment>
<dbReference type="EMBL" id="AF021140">
    <property type="protein sequence ID" value="AAB88798.1"/>
    <property type="molecule type" value="mRNA"/>
</dbReference>
<dbReference type="RefSeq" id="NP_999316.1">
    <property type="nucleotide sequence ID" value="NM_214151.1"/>
</dbReference>
<dbReference type="RefSeq" id="XP_020921878.1">
    <property type="nucleotide sequence ID" value="XM_021066219.1"/>
</dbReference>
<dbReference type="RefSeq" id="XP_020921879.1">
    <property type="nucleotide sequence ID" value="XM_021066220.1"/>
</dbReference>
<dbReference type="RefSeq" id="XP_020921880.1">
    <property type="nucleotide sequence ID" value="XM_021066221.1"/>
</dbReference>
<dbReference type="RefSeq" id="XP_020921881.1">
    <property type="nucleotide sequence ID" value="XM_021066222.1"/>
</dbReference>
<dbReference type="RefSeq" id="XP_020921882.1">
    <property type="nucleotide sequence ID" value="XM_021066223.1"/>
</dbReference>
<dbReference type="RefSeq" id="XP_020921883.1">
    <property type="nucleotide sequence ID" value="XM_021066224.1"/>
</dbReference>
<dbReference type="SMR" id="O18839"/>
<dbReference type="FunCoup" id="O18839">
    <property type="interactions" value="105"/>
</dbReference>
<dbReference type="STRING" id="9823.ENSSSCP00000058999"/>
<dbReference type="PaxDb" id="9823-ENSSSCP00000018279"/>
<dbReference type="Ensembl" id="ENSSSCT00000050128.3">
    <property type="protein sequence ID" value="ENSSSCP00000058999.1"/>
    <property type="gene ID" value="ENSSSCG00000039947.3"/>
</dbReference>
<dbReference type="Ensembl" id="ENSSSCT00000061811.3">
    <property type="protein sequence ID" value="ENSSSCP00000043274.1"/>
    <property type="gene ID" value="ENSSSCG00000039947.3"/>
</dbReference>
<dbReference type="Ensembl" id="ENSSSCT00015068505.1">
    <property type="protein sequence ID" value="ENSSSCP00015027427.1"/>
    <property type="gene ID" value="ENSSSCG00015051436.1"/>
</dbReference>
<dbReference type="Ensembl" id="ENSSSCT00015068569.1">
    <property type="protein sequence ID" value="ENSSSCP00015027464.1"/>
    <property type="gene ID" value="ENSSSCG00015051436.1"/>
</dbReference>
<dbReference type="Ensembl" id="ENSSSCT00025037264.1">
    <property type="protein sequence ID" value="ENSSSCP00025015607.1"/>
    <property type="gene ID" value="ENSSSCG00025027512.1"/>
</dbReference>
<dbReference type="Ensembl" id="ENSSSCT00025037296.1">
    <property type="protein sequence ID" value="ENSSSCP00025015626.1"/>
    <property type="gene ID" value="ENSSSCG00025027512.1"/>
</dbReference>
<dbReference type="Ensembl" id="ENSSSCT00030003180.1">
    <property type="protein sequence ID" value="ENSSSCP00030001226.1"/>
    <property type="gene ID" value="ENSSSCG00030002485.1"/>
</dbReference>
<dbReference type="Ensembl" id="ENSSSCT00030003193.1">
    <property type="protein sequence ID" value="ENSSSCP00030001231.1"/>
    <property type="gene ID" value="ENSSSCG00030002485.1"/>
</dbReference>
<dbReference type="Ensembl" id="ENSSSCT00035030301.1">
    <property type="protein sequence ID" value="ENSSSCP00035011792.1"/>
    <property type="gene ID" value="ENSSSCG00035023144.1"/>
</dbReference>
<dbReference type="Ensembl" id="ENSSSCT00035030306.1">
    <property type="protein sequence ID" value="ENSSSCP00035011795.1"/>
    <property type="gene ID" value="ENSSSCG00035023144.1"/>
</dbReference>
<dbReference type="Ensembl" id="ENSSSCT00040015331.1">
    <property type="protein sequence ID" value="ENSSSCP00040006017.1"/>
    <property type="gene ID" value="ENSSSCG00040011705.1"/>
</dbReference>
<dbReference type="Ensembl" id="ENSSSCT00040015345.1">
    <property type="protein sequence ID" value="ENSSSCP00040006024.1"/>
    <property type="gene ID" value="ENSSSCG00040011705.1"/>
</dbReference>
<dbReference type="Ensembl" id="ENSSSCT00045014093.1">
    <property type="protein sequence ID" value="ENSSSCP00045009751.1"/>
    <property type="gene ID" value="ENSSSCG00045008402.1"/>
</dbReference>
<dbReference type="Ensembl" id="ENSSSCT00045014113.1">
    <property type="protein sequence ID" value="ENSSSCP00045009769.1"/>
    <property type="gene ID" value="ENSSSCG00045008402.1"/>
</dbReference>
<dbReference type="Ensembl" id="ENSSSCT00050004604.1">
    <property type="protein sequence ID" value="ENSSSCP00050001834.1"/>
    <property type="gene ID" value="ENSSSCG00050003450.1"/>
</dbReference>
<dbReference type="Ensembl" id="ENSSSCT00050004615.1">
    <property type="protein sequence ID" value="ENSSSCP00050001842.1"/>
    <property type="gene ID" value="ENSSSCG00050003450.1"/>
</dbReference>
<dbReference type="Ensembl" id="ENSSSCT00055020309.1">
    <property type="protein sequence ID" value="ENSSSCP00055016042.1"/>
    <property type="gene ID" value="ENSSSCG00055010394.1"/>
</dbReference>
<dbReference type="Ensembl" id="ENSSSCT00055020326.1">
    <property type="protein sequence ID" value="ENSSSCP00055016057.1"/>
    <property type="gene ID" value="ENSSSCG00055010394.1"/>
</dbReference>
<dbReference type="Ensembl" id="ENSSSCT00060055244.1">
    <property type="protein sequence ID" value="ENSSSCP00060023598.1"/>
    <property type="gene ID" value="ENSSSCG00060040773.1"/>
</dbReference>
<dbReference type="Ensembl" id="ENSSSCT00060055248.1">
    <property type="protein sequence ID" value="ENSSSCP00060023601.1"/>
    <property type="gene ID" value="ENSSSCG00060040773.1"/>
</dbReference>
<dbReference type="Ensembl" id="ENSSSCT00065075183.1">
    <property type="protein sequence ID" value="ENSSSCP00065032741.1"/>
    <property type="gene ID" value="ENSSSCG00065054903.1"/>
</dbReference>
<dbReference type="Ensembl" id="ENSSSCT00065075186.1">
    <property type="protein sequence ID" value="ENSSSCP00065032743.1"/>
    <property type="gene ID" value="ENSSSCG00065054903.1"/>
</dbReference>
<dbReference type="Ensembl" id="ENSSSCT00070004128.1">
    <property type="protein sequence ID" value="ENSSSCP00070003403.1"/>
    <property type="gene ID" value="ENSSSCG00070002227.1"/>
</dbReference>
<dbReference type="Ensembl" id="ENSSSCT00070004136.1">
    <property type="protein sequence ID" value="ENSSSCP00070003410.1"/>
    <property type="gene ID" value="ENSSSCG00070002227.1"/>
</dbReference>
<dbReference type="Ensembl" id="ENSSSCT00085008885">
    <property type="protein sequence ID" value="ENSSSCP00085006359"/>
    <property type="gene ID" value="ENSSSCG00085004799"/>
</dbReference>
<dbReference type="Ensembl" id="ENSSSCT00085008890">
    <property type="protein sequence ID" value="ENSSSCP00085006364"/>
    <property type="gene ID" value="ENSSSCG00085004799"/>
</dbReference>
<dbReference type="Ensembl" id="ENSSSCT00085008895">
    <property type="protein sequence ID" value="ENSSSCP00085006368"/>
    <property type="gene ID" value="ENSSSCG00085004799"/>
</dbReference>
<dbReference type="Ensembl" id="ENSSSCT00085008898">
    <property type="protein sequence ID" value="ENSSSCP00085006372"/>
    <property type="gene ID" value="ENSSSCG00085004799"/>
</dbReference>
<dbReference type="Ensembl" id="ENSSSCT00090014986">
    <property type="protein sequence ID" value="ENSSSCP00090009649"/>
    <property type="gene ID" value="ENSSSCG00090008360"/>
</dbReference>
<dbReference type="Ensembl" id="ENSSSCT00090015011">
    <property type="protein sequence ID" value="ENSSSCP00090009666"/>
    <property type="gene ID" value="ENSSSCG00090008360"/>
</dbReference>
<dbReference type="Ensembl" id="ENSSSCT00090015015">
    <property type="protein sequence ID" value="ENSSSCP00090009669"/>
    <property type="gene ID" value="ENSSSCG00090008360"/>
</dbReference>
<dbReference type="Ensembl" id="ENSSSCT00090015024">
    <property type="protein sequence ID" value="ENSSSCP00090009676"/>
    <property type="gene ID" value="ENSSSCG00090008360"/>
</dbReference>
<dbReference type="Ensembl" id="ENSSSCT00105044078">
    <property type="protein sequence ID" value="ENSSSCP00105030728"/>
    <property type="gene ID" value="ENSSSCG00105023185"/>
</dbReference>
<dbReference type="Ensembl" id="ENSSSCT00105044088">
    <property type="protein sequence ID" value="ENSSSCP00105030737"/>
    <property type="gene ID" value="ENSSSCG00105023185"/>
</dbReference>
<dbReference type="Ensembl" id="ENSSSCT00105044101">
    <property type="protein sequence ID" value="ENSSSCP00105030748"/>
    <property type="gene ID" value="ENSSSCG00105023185"/>
</dbReference>
<dbReference type="Ensembl" id="ENSSSCT00105044113">
    <property type="protein sequence ID" value="ENSSSCP00105030756"/>
    <property type="gene ID" value="ENSSSCG00105023185"/>
</dbReference>
<dbReference type="Ensembl" id="ENSSSCT00110066951">
    <property type="protein sequence ID" value="ENSSSCP00110047179"/>
    <property type="gene ID" value="ENSSSCG00110035219"/>
</dbReference>
<dbReference type="Ensembl" id="ENSSSCT00110067004">
    <property type="protein sequence ID" value="ENSSSCP00110047227"/>
    <property type="gene ID" value="ENSSSCG00110035247"/>
</dbReference>
<dbReference type="Ensembl" id="ENSSSCT00110067008">
    <property type="protein sequence ID" value="ENSSSCP00110047230"/>
    <property type="gene ID" value="ENSSSCG00110035247"/>
</dbReference>
<dbReference type="Ensembl" id="ENSSSCT00110067012">
    <property type="protein sequence ID" value="ENSSSCP00110047233"/>
    <property type="gene ID" value="ENSSSCG00110035247"/>
</dbReference>
<dbReference type="Ensembl" id="ENSSSCT00115036782">
    <property type="protein sequence ID" value="ENSSSCP00115034812"/>
    <property type="gene ID" value="ENSSSCG00115020752"/>
</dbReference>
<dbReference type="Ensembl" id="ENSSSCT00130017393">
    <property type="protein sequence ID" value="ENSSSCP00130011823"/>
    <property type="gene ID" value="ENSSSCG00130009326"/>
</dbReference>
<dbReference type="Ensembl" id="ENSSSCT00130017396">
    <property type="protein sequence ID" value="ENSSSCP00130011825"/>
    <property type="gene ID" value="ENSSSCG00130009326"/>
</dbReference>
<dbReference type="Ensembl" id="ENSSSCT00130017402">
    <property type="protein sequence ID" value="ENSSSCP00130011831"/>
    <property type="gene ID" value="ENSSSCG00130009326"/>
</dbReference>
<dbReference type="Ensembl" id="ENSSSCT00130017405">
    <property type="protein sequence ID" value="ENSSSCP00130011834"/>
    <property type="gene ID" value="ENSSSCG00130009326"/>
</dbReference>
<dbReference type="GeneID" id="397293"/>
<dbReference type="KEGG" id="ssc:397293"/>
<dbReference type="CTD" id="3759"/>
<dbReference type="VGNC" id="VGNC:89357">
    <property type="gene designation" value="KCNJ2"/>
</dbReference>
<dbReference type="eggNOG" id="KOG3827">
    <property type="taxonomic scope" value="Eukaryota"/>
</dbReference>
<dbReference type="GeneTree" id="ENSGT01030000234586"/>
<dbReference type="InParanoid" id="O18839"/>
<dbReference type="OMA" id="THPEMDH"/>
<dbReference type="OrthoDB" id="273257at2759"/>
<dbReference type="Reactome" id="R-SSC-1296041">
    <property type="pathway name" value="Activation of G protein gated Potassium channels"/>
</dbReference>
<dbReference type="Reactome" id="R-SSC-1296053">
    <property type="pathway name" value="Classical Kir channels"/>
</dbReference>
<dbReference type="Reactome" id="R-SSC-5576886">
    <property type="pathway name" value="Phase 4 - resting membrane potential"/>
</dbReference>
<dbReference type="Reactome" id="R-SSC-997272">
    <property type="pathway name" value="Inhibition of voltage gated Ca2+ channels via Gbeta/gamma subunits"/>
</dbReference>
<dbReference type="Proteomes" id="UP000008227">
    <property type="component" value="Chromosome 12"/>
</dbReference>
<dbReference type="Proteomes" id="UP000314985">
    <property type="component" value="Chromosome 12"/>
</dbReference>
<dbReference type="Proteomes" id="UP000694570">
    <property type="component" value="Unplaced"/>
</dbReference>
<dbReference type="Proteomes" id="UP000694571">
    <property type="component" value="Unplaced"/>
</dbReference>
<dbReference type="Proteomes" id="UP000694720">
    <property type="component" value="Unplaced"/>
</dbReference>
<dbReference type="Proteomes" id="UP000694722">
    <property type="component" value="Unplaced"/>
</dbReference>
<dbReference type="Proteomes" id="UP000694723">
    <property type="component" value="Unplaced"/>
</dbReference>
<dbReference type="Proteomes" id="UP000694724">
    <property type="component" value="Unplaced"/>
</dbReference>
<dbReference type="Proteomes" id="UP000694725">
    <property type="component" value="Unplaced"/>
</dbReference>
<dbReference type="Proteomes" id="UP000694726">
    <property type="component" value="Unplaced"/>
</dbReference>
<dbReference type="Proteomes" id="UP000694727">
    <property type="component" value="Unplaced"/>
</dbReference>
<dbReference type="Proteomes" id="UP000694728">
    <property type="component" value="Unplaced"/>
</dbReference>
<dbReference type="Bgee" id="ENSSSCG00000039947">
    <property type="expression patterns" value="Expressed in heart left ventricle and 40 other cell types or tissues"/>
</dbReference>
<dbReference type="ExpressionAtlas" id="O18839">
    <property type="expression patterns" value="baseline and differential"/>
</dbReference>
<dbReference type="GO" id="GO:0016020">
    <property type="term" value="C:membrane"/>
    <property type="evidence" value="ECO:0000250"/>
    <property type="project" value="UniProtKB"/>
</dbReference>
<dbReference type="GO" id="GO:0005886">
    <property type="term" value="C:plasma membrane"/>
    <property type="evidence" value="ECO:0000318"/>
    <property type="project" value="GO_Central"/>
</dbReference>
<dbReference type="GO" id="GO:0030315">
    <property type="term" value="C:T-tubule"/>
    <property type="evidence" value="ECO:0000250"/>
    <property type="project" value="UniProtKB"/>
</dbReference>
<dbReference type="GO" id="GO:0008076">
    <property type="term" value="C:voltage-gated potassium channel complex"/>
    <property type="evidence" value="ECO:0007669"/>
    <property type="project" value="Ensembl"/>
</dbReference>
<dbReference type="GO" id="GO:0042802">
    <property type="term" value="F:identical protein binding"/>
    <property type="evidence" value="ECO:0007669"/>
    <property type="project" value="Ensembl"/>
</dbReference>
<dbReference type="GO" id="GO:0005242">
    <property type="term" value="F:inward rectifier potassium channel activity"/>
    <property type="evidence" value="ECO:0000250"/>
    <property type="project" value="UniProtKB"/>
</dbReference>
<dbReference type="GO" id="GO:0005546">
    <property type="term" value="F:phosphatidylinositol-4,5-bisphosphate binding"/>
    <property type="evidence" value="ECO:0000250"/>
    <property type="project" value="UniProtKB"/>
</dbReference>
<dbReference type="GO" id="GO:0086008">
    <property type="term" value="F:voltage-gated potassium channel activity involved in cardiac muscle cell action potential repolarization"/>
    <property type="evidence" value="ECO:0007669"/>
    <property type="project" value="Ensembl"/>
</dbReference>
<dbReference type="GO" id="GO:0086002">
    <property type="term" value="P:cardiac muscle cell action potential involved in contraction"/>
    <property type="evidence" value="ECO:0007669"/>
    <property type="project" value="Ensembl"/>
</dbReference>
<dbReference type="GO" id="GO:0015693">
    <property type="term" value="P:magnesium ion transport"/>
    <property type="evidence" value="ECO:0007669"/>
    <property type="project" value="Ensembl"/>
</dbReference>
<dbReference type="GO" id="GO:1990573">
    <property type="term" value="P:potassium ion import across plasma membrane"/>
    <property type="evidence" value="ECO:0000318"/>
    <property type="project" value="GO_Central"/>
</dbReference>
<dbReference type="GO" id="GO:0006813">
    <property type="term" value="P:potassium ion transport"/>
    <property type="evidence" value="ECO:0000250"/>
    <property type="project" value="UniProtKB"/>
</dbReference>
<dbReference type="GO" id="GO:0051289">
    <property type="term" value="P:protein homotetramerization"/>
    <property type="evidence" value="ECO:0000250"/>
    <property type="project" value="UniProtKB"/>
</dbReference>
<dbReference type="GO" id="GO:0086091">
    <property type="term" value="P:regulation of heart rate by cardiac conduction"/>
    <property type="evidence" value="ECO:0007669"/>
    <property type="project" value="Ensembl"/>
</dbReference>
<dbReference type="GO" id="GO:0060306">
    <property type="term" value="P:regulation of membrane repolarization"/>
    <property type="evidence" value="ECO:0007669"/>
    <property type="project" value="Ensembl"/>
</dbReference>
<dbReference type="GO" id="GO:0034765">
    <property type="term" value="P:regulation of monoatomic ion transmembrane transport"/>
    <property type="evidence" value="ECO:0000318"/>
    <property type="project" value="GO_Central"/>
</dbReference>
<dbReference type="GO" id="GO:0014861">
    <property type="term" value="P:regulation of skeletal muscle contraction via regulation of action potential"/>
    <property type="evidence" value="ECO:0007669"/>
    <property type="project" value="Ensembl"/>
</dbReference>
<dbReference type="GO" id="GO:0055119">
    <property type="term" value="P:relaxation of cardiac muscle"/>
    <property type="evidence" value="ECO:0007669"/>
    <property type="project" value="Ensembl"/>
</dbReference>
<dbReference type="GO" id="GO:0090076">
    <property type="term" value="P:relaxation of skeletal muscle"/>
    <property type="evidence" value="ECO:0007669"/>
    <property type="project" value="Ensembl"/>
</dbReference>
<dbReference type="FunFam" id="1.10.287.70:FF:000039">
    <property type="entry name" value="ATP-sensitive inward rectifier potassium channel 12"/>
    <property type="match status" value="1"/>
</dbReference>
<dbReference type="FunFam" id="2.60.40.1400:FF:000001">
    <property type="entry name" value="G protein-activated inward rectifier potassium channel 2"/>
    <property type="match status" value="1"/>
</dbReference>
<dbReference type="Gene3D" id="1.10.287.70">
    <property type="match status" value="1"/>
</dbReference>
<dbReference type="Gene3D" id="2.60.40.1400">
    <property type="entry name" value="G protein-activated inward rectifier potassium channel 1"/>
    <property type="match status" value="1"/>
</dbReference>
<dbReference type="InterPro" id="IPR014756">
    <property type="entry name" value="Ig_E-set"/>
</dbReference>
<dbReference type="InterPro" id="IPR041647">
    <property type="entry name" value="IRK_C"/>
</dbReference>
<dbReference type="InterPro" id="IPR016449">
    <property type="entry name" value="K_chnl_inward-rec_Kir"/>
</dbReference>
<dbReference type="InterPro" id="IPR003271">
    <property type="entry name" value="K_chnl_inward-rec_Kir2.1"/>
</dbReference>
<dbReference type="InterPro" id="IPR013518">
    <property type="entry name" value="K_chnl_inward-rec_Kir_cyto"/>
</dbReference>
<dbReference type="InterPro" id="IPR013673">
    <property type="entry name" value="K_chnl_inward-rec_Kir_N"/>
</dbReference>
<dbReference type="InterPro" id="IPR040445">
    <property type="entry name" value="Kir_TM"/>
</dbReference>
<dbReference type="PANTHER" id="PTHR11767">
    <property type="entry name" value="INWARD RECTIFIER POTASSIUM CHANNEL"/>
    <property type="match status" value="1"/>
</dbReference>
<dbReference type="PANTHER" id="PTHR11767:SF43">
    <property type="entry name" value="INWARD RECTIFIER POTASSIUM CHANNEL 2"/>
    <property type="match status" value="1"/>
</dbReference>
<dbReference type="Pfam" id="PF01007">
    <property type="entry name" value="IRK"/>
    <property type="match status" value="1"/>
</dbReference>
<dbReference type="Pfam" id="PF17655">
    <property type="entry name" value="IRK_C"/>
    <property type="match status" value="1"/>
</dbReference>
<dbReference type="Pfam" id="PF08466">
    <property type="entry name" value="IRK_N"/>
    <property type="match status" value="1"/>
</dbReference>
<dbReference type="PIRSF" id="PIRSF005465">
    <property type="entry name" value="GIRK_kir"/>
    <property type="match status" value="1"/>
</dbReference>
<dbReference type="PRINTS" id="PR01324">
    <property type="entry name" value="KIR21CHANNEL"/>
</dbReference>
<dbReference type="PRINTS" id="PR01320">
    <property type="entry name" value="KIRCHANNEL"/>
</dbReference>
<dbReference type="SUPFAM" id="SSF81296">
    <property type="entry name" value="E set domains"/>
    <property type="match status" value="1"/>
</dbReference>
<dbReference type="SUPFAM" id="SSF81324">
    <property type="entry name" value="Voltage-gated potassium channels"/>
    <property type="match status" value="1"/>
</dbReference>
<sequence>MGSVRTNRYSIVSSEEDGMKLATLAVANGFGNGKSKVHTRQQCRSRFVKKDGHCNVQFINVGEKGQRYLADIFTTCVDIRWRWMLVIFCLAFVLSWLFFGCVFWLIALLHGDLDASKESKACVSEVNSFTAAFLFSIETQTTIGYGFRCVTDECPIAVFMVVFQSIVGCIIDAFIIGAVMAKMAKPKKRNETLVFSHNAVIAMRDGKLCLMWRVGNLRKSHLVEAHVRAQLLKSRITSEGEYIPLDQIDINVGFDSGIDRIFLVSPITIVHEIDEDSPLYDLSKQDIDNADFEIVVILEGMVEATAMTTQCRSSYLANEILWGHRYEPVLFEEKHYYKVDYSRFHKTYEVPNTPLCSARDLAEKKYILSNANSFCYENEVALTSKEEDDSENGVPESTSTDTPPDIDLHNQASVPLEPRPLRRESEI</sequence>
<name>KCNJ2_PIG</name>
<protein>
    <recommendedName>
        <fullName>Inward rectifier potassium channel 2</fullName>
    </recommendedName>
    <alternativeName>
        <fullName>Inward rectifier K(+) channel Kir2.1</fullName>
        <shortName>IRK-1</shortName>
    </alternativeName>
    <alternativeName>
        <fullName>Potassium channel, inwardly rectifying subfamily J member 2</fullName>
    </alternativeName>
</protein>
<organism>
    <name type="scientific">Sus scrofa</name>
    <name type="common">Pig</name>
    <dbReference type="NCBI Taxonomy" id="9823"/>
    <lineage>
        <taxon>Eukaryota</taxon>
        <taxon>Metazoa</taxon>
        <taxon>Chordata</taxon>
        <taxon>Craniata</taxon>
        <taxon>Vertebrata</taxon>
        <taxon>Euteleostomi</taxon>
        <taxon>Mammalia</taxon>
        <taxon>Eutheria</taxon>
        <taxon>Laurasiatheria</taxon>
        <taxon>Artiodactyla</taxon>
        <taxon>Suina</taxon>
        <taxon>Suidae</taxon>
        <taxon>Sus</taxon>
    </lineage>
</organism>